<comment type="function">
    <text evidence="1">Catalyzes the phosphorylation of the position 2 hydroxy group of 4-diphosphocytidyl-2C-methyl-D-erythritol.</text>
</comment>
<comment type="catalytic activity">
    <reaction evidence="1">
        <text>4-CDP-2-C-methyl-D-erythritol + ATP = 4-CDP-2-C-methyl-D-erythritol 2-phosphate + ADP + H(+)</text>
        <dbReference type="Rhea" id="RHEA:18437"/>
        <dbReference type="ChEBI" id="CHEBI:15378"/>
        <dbReference type="ChEBI" id="CHEBI:30616"/>
        <dbReference type="ChEBI" id="CHEBI:57823"/>
        <dbReference type="ChEBI" id="CHEBI:57919"/>
        <dbReference type="ChEBI" id="CHEBI:456216"/>
        <dbReference type="EC" id="2.7.1.148"/>
    </reaction>
</comment>
<comment type="pathway">
    <text evidence="1">Isoprenoid biosynthesis; isopentenyl diphosphate biosynthesis via DXP pathway; isopentenyl diphosphate from 1-deoxy-D-xylulose 5-phosphate: step 3/6.</text>
</comment>
<comment type="subunit">
    <text evidence="1">Homodimer.</text>
</comment>
<comment type="similarity">
    <text evidence="1">Belongs to the GHMP kinase family. IspE subfamily.</text>
</comment>
<proteinExistence type="inferred from homology"/>
<feature type="chain" id="PRO_0000189260" description="4-diphosphocytidyl-2-C-methyl-D-erythritol kinase">
    <location>
        <begin position="1"/>
        <end position="283"/>
    </location>
</feature>
<feature type="active site" evidence="1">
    <location>
        <position position="10"/>
    </location>
</feature>
<feature type="active site" evidence="1">
    <location>
        <position position="141"/>
    </location>
</feature>
<feature type="binding site" evidence="1">
    <location>
        <begin position="99"/>
        <end position="109"/>
    </location>
    <ligand>
        <name>ATP</name>
        <dbReference type="ChEBI" id="CHEBI:30616"/>
    </ligand>
</feature>
<accession>Q83LD8</accession>
<accession>Q7C1Y3</accession>
<gene>
    <name evidence="1" type="primary">ispE</name>
    <name type="ordered locus">SF1211</name>
    <name type="ordered locus">S1295</name>
</gene>
<dbReference type="EC" id="2.7.1.148" evidence="1"/>
<dbReference type="EMBL" id="AE005674">
    <property type="protein sequence ID" value="AAN42824.1"/>
    <property type="molecule type" value="Genomic_DNA"/>
</dbReference>
<dbReference type="EMBL" id="AE014073">
    <property type="protein sequence ID" value="AAP16710.1"/>
    <property type="molecule type" value="Genomic_DNA"/>
</dbReference>
<dbReference type="RefSeq" id="WP_001260333.1">
    <property type="nucleotide sequence ID" value="NZ_WPGW01000029.1"/>
</dbReference>
<dbReference type="SMR" id="Q83LD8"/>
<dbReference type="STRING" id="198214.SF1211"/>
<dbReference type="DrugBank" id="DB03687">
    <property type="generic name" value="4-(Cytidine 5'-diphospho)-2-C-methyl-D-erythritol"/>
</dbReference>
<dbReference type="DrugBank" id="DB04395">
    <property type="generic name" value="Phosphoaminophosphonic Acid-Adenylate Ester"/>
</dbReference>
<dbReference type="PaxDb" id="198214-SF1211"/>
<dbReference type="GeneID" id="93775273"/>
<dbReference type="KEGG" id="sfl:SF1211"/>
<dbReference type="KEGG" id="sfx:S1295"/>
<dbReference type="PATRIC" id="fig|198214.7.peg.1428"/>
<dbReference type="HOGENOM" id="CLU_053057_3_0_6"/>
<dbReference type="UniPathway" id="UPA00056">
    <property type="reaction ID" value="UER00094"/>
</dbReference>
<dbReference type="Proteomes" id="UP000001006">
    <property type="component" value="Chromosome"/>
</dbReference>
<dbReference type="Proteomes" id="UP000002673">
    <property type="component" value="Chromosome"/>
</dbReference>
<dbReference type="GO" id="GO:0050515">
    <property type="term" value="F:4-(cytidine 5'-diphospho)-2-C-methyl-D-erythritol kinase activity"/>
    <property type="evidence" value="ECO:0007669"/>
    <property type="project" value="UniProtKB-UniRule"/>
</dbReference>
<dbReference type="GO" id="GO:0005524">
    <property type="term" value="F:ATP binding"/>
    <property type="evidence" value="ECO:0007669"/>
    <property type="project" value="UniProtKB-UniRule"/>
</dbReference>
<dbReference type="GO" id="GO:0019288">
    <property type="term" value="P:isopentenyl diphosphate biosynthetic process, methylerythritol 4-phosphate pathway"/>
    <property type="evidence" value="ECO:0007669"/>
    <property type="project" value="UniProtKB-UniRule"/>
</dbReference>
<dbReference type="GO" id="GO:0016114">
    <property type="term" value="P:terpenoid biosynthetic process"/>
    <property type="evidence" value="ECO:0007669"/>
    <property type="project" value="InterPro"/>
</dbReference>
<dbReference type="FunFam" id="3.30.230.10:FF:000022">
    <property type="entry name" value="4-diphosphocytidyl-2-C-methyl-D-erythritol kinase"/>
    <property type="match status" value="1"/>
</dbReference>
<dbReference type="FunFam" id="3.30.70.890:FF:000004">
    <property type="entry name" value="4-diphosphocytidyl-2-C-methyl-D-erythritol kinase"/>
    <property type="match status" value="1"/>
</dbReference>
<dbReference type="Gene3D" id="3.30.230.10">
    <property type="match status" value="1"/>
</dbReference>
<dbReference type="Gene3D" id="3.30.70.890">
    <property type="entry name" value="GHMP kinase, C-terminal domain"/>
    <property type="match status" value="1"/>
</dbReference>
<dbReference type="HAMAP" id="MF_00061">
    <property type="entry name" value="IspE"/>
    <property type="match status" value="1"/>
</dbReference>
<dbReference type="InterPro" id="IPR013750">
    <property type="entry name" value="GHMP_kinase_C_dom"/>
</dbReference>
<dbReference type="InterPro" id="IPR036554">
    <property type="entry name" value="GHMP_kinase_C_sf"/>
</dbReference>
<dbReference type="InterPro" id="IPR006204">
    <property type="entry name" value="GHMP_kinase_N_dom"/>
</dbReference>
<dbReference type="InterPro" id="IPR004424">
    <property type="entry name" value="IspE"/>
</dbReference>
<dbReference type="InterPro" id="IPR020568">
    <property type="entry name" value="Ribosomal_Su5_D2-typ_SF"/>
</dbReference>
<dbReference type="InterPro" id="IPR014721">
    <property type="entry name" value="Ribsml_uS5_D2-typ_fold_subgr"/>
</dbReference>
<dbReference type="NCBIfam" id="TIGR00154">
    <property type="entry name" value="ispE"/>
    <property type="match status" value="1"/>
</dbReference>
<dbReference type="PANTHER" id="PTHR43527">
    <property type="entry name" value="4-DIPHOSPHOCYTIDYL-2-C-METHYL-D-ERYTHRITOL KINASE, CHLOROPLASTIC"/>
    <property type="match status" value="1"/>
</dbReference>
<dbReference type="PANTHER" id="PTHR43527:SF2">
    <property type="entry name" value="4-DIPHOSPHOCYTIDYL-2-C-METHYL-D-ERYTHRITOL KINASE, CHLOROPLASTIC"/>
    <property type="match status" value="1"/>
</dbReference>
<dbReference type="Pfam" id="PF08544">
    <property type="entry name" value="GHMP_kinases_C"/>
    <property type="match status" value="1"/>
</dbReference>
<dbReference type="Pfam" id="PF00288">
    <property type="entry name" value="GHMP_kinases_N"/>
    <property type="match status" value="1"/>
</dbReference>
<dbReference type="PIRSF" id="PIRSF010376">
    <property type="entry name" value="IspE"/>
    <property type="match status" value="1"/>
</dbReference>
<dbReference type="SUPFAM" id="SSF55060">
    <property type="entry name" value="GHMP Kinase, C-terminal domain"/>
    <property type="match status" value="1"/>
</dbReference>
<dbReference type="SUPFAM" id="SSF54211">
    <property type="entry name" value="Ribosomal protein S5 domain 2-like"/>
    <property type="match status" value="1"/>
</dbReference>
<organism>
    <name type="scientific">Shigella flexneri</name>
    <dbReference type="NCBI Taxonomy" id="623"/>
    <lineage>
        <taxon>Bacteria</taxon>
        <taxon>Pseudomonadati</taxon>
        <taxon>Pseudomonadota</taxon>
        <taxon>Gammaproteobacteria</taxon>
        <taxon>Enterobacterales</taxon>
        <taxon>Enterobacteriaceae</taxon>
        <taxon>Shigella</taxon>
    </lineage>
</organism>
<reference key="1">
    <citation type="journal article" date="2002" name="Nucleic Acids Res.">
        <title>Genome sequence of Shigella flexneri 2a: insights into pathogenicity through comparison with genomes of Escherichia coli K12 and O157.</title>
        <authorList>
            <person name="Jin Q."/>
            <person name="Yuan Z."/>
            <person name="Xu J."/>
            <person name="Wang Y."/>
            <person name="Shen Y."/>
            <person name="Lu W."/>
            <person name="Wang J."/>
            <person name="Liu H."/>
            <person name="Yang J."/>
            <person name="Yang F."/>
            <person name="Zhang X."/>
            <person name="Zhang J."/>
            <person name="Yang G."/>
            <person name="Wu H."/>
            <person name="Qu D."/>
            <person name="Dong J."/>
            <person name="Sun L."/>
            <person name="Xue Y."/>
            <person name="Zhao A."/>
            <person name="Gao Y."/>
            <person name="Zhu J."/>
            <person name="Kan B."/>
            <person name="Ding K."/>
            <person name="Chen S."/>
            <person name="Cheng H."/>
            <person name="Yao Z."/>
            <person name="He B."/>
            <person name="Chen R."/>
            <person name="Ma D."/>
            <person name="Qiang B."/>
            <person name="Wen Y."/>
            <person name="Hou Y."/>
            <person name="Yu J."/>
        </authorList>
    </citation>
    <scope>NUCLEOTIDE SEQUENCE [LARGE SCALE GENOMIC DNA]</scope>
    <source>
        <strain>301 / Serotype 2a</strain>
    </source>
</reference>
<reference key="2">
    <citation type="journal article" date="2003" name="Infect. Immun.">
        <title>Complete genome sequence and comparative genomics of Shigella flexneri serotype 2a strain 2457T.</title>
        <authorList>
            <person name="Wei J."/>
            <person name="Goldberg M.B."/>
            <person name="Burland V."/>
            <person name="Venkatesan M.M."/>
            <person name="Deng W."/>
            <person name="Fournier G."/>
            <person name="Mayhew G.F."/>
            <person name="Plunkett G. III"/>
            <person name="Rose D.J."/>
            <person name="Darling A."/>
            <person name="Mau B."/>
            <person name="Perna N.T."/>
            <person name="Payne S.M."/>
            <person name="Runyen-Janecky L.J."/>
            <person name="Zhou S."/>
            <person name="Schwartz D.C."/>
            <person name="Blattner F.R."/>
        </authorList>
    </citation>
    <scope>NUCLEOTIDE SEQUENCE [LARGE SCALE GENOMIC DNA]</scope>
    <source>
        <strain>ATCC 700930 / 2457T / Serotype 2a</strain>
    </source>
</reference>
<protein>
    <recommendedName>
        <fullName evidence="1">4-diphosphocytidyl-2-C-methyl-D-erythritol kinase</fullName>
        <shortName evidence="1">CMK</shortName>
        <ecNumber evidence="1">2.7.1.148</ecNumber>
    </recommendedName>
    <alternativeName>
        <fullName evidence="1">4-(cytidine-5'-diphospho)-2-C-methyl-D-erythritol kinase</fullName>
    </alternativeName>
</protein>
<evidence type="ECO:0000255" key="1">
    <source>
        <dbReference type="HAMAP-Rule" id="MF_00061"/>
    </source>
</evidence>
<sequence length="283" mass="30953">MRTQWPSPAKLNLFLYITGQRADGYHTLQTLFQFLDYGDTISIELRDDGDIRLLTPVEGVEHEDNLIVRAARLLMKTAADSGRLPTGSGANISIDKRLPMGGGLGGGSSNAATVLVALNHLWQCGLSMDELAEMGLTLGADVPVFVRGHAAFAEGVGEILTPVDPPEKWYLVAHPGVSIPTPVIFKDPELPRNTPKRSIETLLKCEFSNDCEVIARKRFREVDAVLSWLLEYAPSRLTGTGACVFAEFDTESEARQVLEQAPEWLNGFVAKGVNLSPLHRAML</sequence>
<name>ISPE_SHIFL</name>
<keyword id="KW-0067">ATP-binding</keyword>
<keyword id="KW-0414">Isoprene biosynthesis</keyword>
<keyword id="KW-0418">Kinase</keyword>
<keyword id="KW-0547">Nucleotide-binding</keyword>
<keyword id="KW-1185">Reference proteome</keyword>
<keyword id="KW-0808">Transferase</keyword>